<comment type="function">
    <text evidence="1">Quinone reductase that provides resistance to thiol-specific stress caused by electrophilic quinones.</text>
</comment>
<comment type="function">
    <text evidence="1">Also exhibits azoreductase activity. Catalyzes the reductive cleavage of the azo bond in aromatic azo compounds to the corresponding amines.</text>
</comment>
<comment type="catalytic activity">
    <reaction evidence="1">
        <text>2 a quinone + NADH + H(+) = 2 a 1,4-benzosemiquinone + NAD(+)</text>
        <dbReference type="Rhea" id="RHEA:65952"/>
        <dbReference type="ChEBI" id="CHEBI:15378"/>
        <dbReference type="ChEBI" id="CHEBI:57540"/>
        <dbReference type="ChEBI" id="CHEBI:57945"/>
        <dbReference type="ChEBI" id="CHEBI:132124"/>
        <dbReference type="ChEBI" id="CHEBI:134225"/>
    </reaction>
</comment>
<comment type="catalytic activity">
    <reaction evidence="1">
        <text>N,N-dimethyl-1,4-phenylenediamine + anthranilate + 2 NAD(+) = 2-(4-dimethylaminophenyl)diazenylbenzoate + 2 NADH + 2 H(+)</text>
        <dbReference type="Rhea" id="RHEA:55872"/>
        <dbReference type="ChEBI" id="CHEBI:15378"/>
        <dbReference type="ChEBI" id="CHEBI:15783"/>
        <dbReference type="ChEBI" id="CHEBI:16567"/>
        <dbReference type="ChEBI" id="CHEBI:57540"/>
        <dbReference type="ChEBI" id="CHEBI:57945"/>
        <dbReference type="ChEBI" id="CHEBI:71579"/>
        <dbReference type="EC" id="1.7.1.17"/>
    </reaction>
</comment>
<comment type="cofactor">
    <cofactor evidence="1">
        <name>FMN</name>
        <dbReference type="ChEBI" id="CHEBI:58210"/>
    </cofactor>
    <text evidence="1">Binds 1 FMN per subunit.</text>
</comment>
<comment type="subunit">
    <text evidence="1">Homodimer.</text>
</comment>
<comment type="similarity">
    <text evidence="1">Belongs to the azoreductase type 1 family.</text>
</comment>
<gene>
    <name evidence="1" type="primary">azoR</name>
    <name type="ordered locus">Pnap_1540</name>
</gene>
<evidence type="ECO:0000255" key="1">
    <source>
        <dbReference type="HAMAP-Rule" id="MF_01216"/>
    </source>
</evidence>
<reference key="1">
    <citation type="journal article" date="2009" name="Environ. Microbiol.">
        <title>The genome of Polaromonas naphthalenivorans strain CJ2, isolated from coal tar-contaminated sediment, reveals physiological and metabolic versatility and evolution through extensive horizontal gene transfer.</title>
        <authorList>
            <person name="Yagi J.M."/>
            <person name="Sims D."/>
            <person name="Brettin T."/>
            <person name="Bruce D."/>
            <person name="Madsen E.L."/>
        </authorList>
    </citation>
    <scope>NUCLEOTIDE SEQUENCE [LARGE SCALE GENOMIC DNA]</scope>
    <source>
        <strain>CJ2</strain>
    </source>
</reference>
<keyword id="KW-0285">Flavoprotein</keyword>
<keyword id="KW-0288">FMN</keyword>
<keyword id="KW-0520">NAD</keyword>
<keyword id="KW-0560">Oxidoreductase</keyword>
<keyword id="KW-1185">Reference proteome</keyword>
<sequence>MSKLLHIDSSILGSNSVSRQLTAQIVASWRAAHPATEVSYLDLAMDSPSHLSVESLGFRLPAGTADLSEVQQRENAISEALVSQFMAADVLVIGAPLYNFSIPSQLKAWIDRVAQAGRTFKYTEKGPVGLAGGKTIIVASARGGMYSTSDAGNAMEHQESYLKTVFGFFGVTDVRFVRAEGLAMGEAAKAAALAAAQVEILAQTHSAANQPQAVLVA</sequence>
<proteinExistence type="inferred from homology"/>
<organism>
    <name type="scientific">Polaromonas naphthalenivorans (strain CJ2)</name>
    <dbReference type="NCBI Taxonomy" id="365044"/>
    <lineage>
        <taxon>Bacteria</taxon>
        <taxon>Pseudomonadati</taxon>
        <taxon>Pseudomonadota</taxon>
        <taxon>Betaproteobacteria</taxon>
        <taxon>Burkholderiales</taxon>
        <taxon>Comamonadaceae</taxon>
        <taxon>Polaromonas</taxon>
    </lineage>
</organism>
<accession>A1VMH6</accession>
<dbReference type="EC" id="1.6.5.-" evidence="1"/>
<dbReference type="EC" id="1.7.1.17" evidence="1"/>
<dbReference type="EMBL" id="CP000529">
    <property type="protein sequence ID" value="ABM36854.1"/>
    <property type="molecule type" value="Genomic_DNA"/>
</dbReference>
<dbReference type="RefSeq" id="WP_011800941.1">
    <property type="nucleotide sequence ID" value="NC_008781.1"/>
</dbReference>
<dbReference type="SMR" id="A1VMH6"/>
<dbReference type="STRING" id="365044.Pnap_1540"/>
<dbReference type="KEGG" id="pna:Pnap_1540"/>
<dbReference type="eggNOG" id="COG1182">
    <property type="taxonomic scope" value="Bacteria"/>
</dbReference>
<dbReference type="HOGENOM" id="CLU_088964_0_0_4"/>
<dbReference type="OrthoDB" id="9787136at2"/>
<dbReference type="Proteomes" id="UP000000644">
    <property type="component" value="Chromosome"/>
</dbReference>
<dbReference type="GO" id="GO:0009055">
    <property type="term" value="F:electron transfer activity"/>
    <property type="evidence" value="ECO:0007669"/>
    <property type="project" value="UniProtKB-UniRule"/>
</dbReference>
<dbReference type="GO" id="GO:0010181">
    <property type="term" value="F:FMN binding"/>
    <property type="evidence" value="ECO:0007669"/>
    <property type="project" value="UniProtKB-UniRule"/>
</dbReference>
<dbReference type="GO" id="GO:0016652">
    <property type="term" value="F:oxidoreductase activity, acting on NAD(P)H as acceptor"/>
    <property type="evidence" value="ECO:0007669"/>
    <property type="project" value="UniProtKB-UniRule"/>
</dbReference>
<dbReference type="GO" id="GO:0016655">
    <property type="term" value="F:oxidoreductase activity, acting on NAD(P)H, quinone or similar compound as acceptor"/>
    <property type="evidence" value="ECO:0007669"/>
    <property type="project" value="InterPro"/>
</dbReference>
<dbReference type="Gene3D" id="3.40.50.360">
    <property type="match status" value="1"/>
</dbReference>
<dbReference type="HAMAP" id="MF_01216">
    <property type="entry name" value="Azoreductase_type1"/>
    <property type="match status" value="1"/>
</dbReference>
<dbReference type="InterPro" id="IPR003680">
    <property type="entry name" value="Flavodoxin_fold"/>
</dbReference>
<dbReference type="InterPro" id="IPR029039">
    <property type="entry name" value="Flavoprotein-like_sf"/>
</dbReference>
<dbReference type="InterPro" id="IPR050104">
    <property type="entry name" value="FMN-dep_NADH:Q_OxRdtase_AzoR1"/>
</dbReference>
<dbReference type="InterPro" id="IPR023048">
    <property type="entry name" value="NADH:quinone_OxRdtase_FMN_depd"/>
</dbReference>
<dbReference type="PANTHER" id="PTHR43741">
    <property type="entry name" value="FMN-DEPENDENT NADH-AZOREDUCTASE 1"/>
    <property type="match status" value="1"/>
</dbReference>
<dbReference type="PANTHER" id="PTHR43741:SF4">
    <property type="entry name" value="FMN-DEPENDENT NADH:QUINONE OXIDOREDUCTASE"/>
    <property type="match status" value="1"/>
</dbReference>
<dbReference type="Pfam" id="PF02525">
    <property type="entry name" value="Flavodoxin_2"/>
    <property type="match status" value="1"/>
</dbReference>
<dbReference type="SUPFAM" id="SSF52218">
    <property type="entry name" value="Flavoproteins"/>
    <property type="match status" value="1"/>
</dbReference>
<protein>
    <recommendedName>
        <fullName evidence="1">FMN-dependent NADH:quinone oxidoreductase</fullName>
        <ecNumber evidence="1">1.6.5.-</ecNumber>
    </recommendedName>
    <alternativeName>
        <fullName evidence="1">Azo-dye reductase</fullName>
    </alternativeName>
    <alternativeName>
        <fullName evidence="1">FMN-dependent NADH-azo compound oxidoreductase</fullName>
    </alternativeName>
    <alternativeName>
        <fullName evidence="1">FMN-dependent NADH-azoreductase</fullName>
        <ecNumber evidence="1">1.7.1.17</ecNumber>
    </alternativeName>
</protein>
<name>AZOR_POLNA</name>
<feature type="chain" id="PRO_1000138985" description="FMN-dependent NADH:quinone oxidoreductase">
    <location>
        <begin position="1"/>
        <end position="217"/>
    </location>
</feature>
<feature type="binding site" evidence="1">
    <location>
        <position position="10"/>
    </location>
    <ligand>
        <name>FMN</name>
        <dbReference type="ChEBI" id="CHEBI:58210"/>
    </ligand>
</feature>
<feature type="binding site" evidence="1">
    <location>
        <begin position="16"/>
        <end position="18"/>
    </location>
    <ligand>
        <name>FMN</name>
        <dbReference type="ChEBI" id="CHEBI:58210"/>
    </ligand>
</feature>